<sequence>MPVRFRGLSEYKRNFRWKTPELCSPSQEQKSPWAGLRSDQLGITREPNFISKRRVPYHNPQISKSFEWTGDCDSDDPVETEALKTAESLAEHSNDVNQENTETPEGPRLPPKVRSHSSDSGVETALALAGNSMKKTPPVAPPNQKEAFVSPKKEAEKVNNGLHRVLQRKGGMNTPHLSTFPRNSEYQSQFVWKSPHEKSPILAAEEALYNTKREELIQKPAEDASKQEKSEQKHPKRKNKQHISQKPLSLHTHRGKMNTEYRSKFLSPAQYFYKDGAWSRIRSKVPNQASQNPLNSMWYMEVRELRARAKAYRQRIEGTHFSRYHLNQLLSDNNSLWDVSSNSSSEEGISNDIRALDLAGVSEKETAPRPKMLQQPGSREQSHQDDTEKKGLSDAPTVPVKRRLVWGEQEGTAEKDSQQLREEEEKENEQAAVVTQNLEKNNEGINEDNRIEGENTCLPNSPAAVSESSSVSSEPGGRLPTPKLRALGRAQRTHHDLTTPAVGGAVLVSPPKFKSSTSQQRMRSLGTDPSSVGQGAREASQRRSFRPGAKLKAVSLLTSPPAGLGTVDPLPLRQDQWHPNGVSGETVAINSAYQERSSTPPVLKSTKNRPMPCWSPSPRIQGTLKDPEFQHNGNVGNPKMGSFQLPLQERNYNNEDDRLSQISARSAASSSLASQILERAQKRKEDFWGKT</sequence>
<feature type="chain" id="PRO_0000299063" description="Nuclear protein MDM1">
    <location>
        <begin position="1"/>
        <end position="691"/>
    </location>
</feature>
<feature type="region of interest" description="Disordered" evidence="3">
    <location>
        <begin position="87"/>
        <end position="155"/>
    </location>
</feature>
<feature type="region of interest" description="Disordered" evidence="3">
    <location>
        <begin position="219"/>
        <end position="254"/>
    </location>
</feature>
<feature type="region of interest" description="Disordered" evidence="3">
    <location>
        <begin position="360"/>
        <end position="552"/>
    </location>
</feature>
<feature type="region of interest" description="Disordered" evidence="3">
    <location>
        <begin position="594"/>
        <end position="658"/>
    </location>
</feature>
<feature type="coiled-coil region" evidence="2">
    <location>
        <begin position="411"/>
        <end position="445"/>
    </location>
</feature>
<feature type="short sequence motif" description="ST]-E-Y-X(3)-F motif 1; required for efficient microtubule binding and stabilization" evidence="1">
    <location>
        <begin position="9"/>
        <end position="15"/>
    </location>
</feature>
<feature type="short sequence motif" description="ST]-E-Y-X(3)-F motif 2; required for efficient microtubule binding and stabilization" evidence="1">
    <location>
        <begin position="184"/>
        <end position="190"/>
    </location>
</feature>
<feature type="short sequence motif" description="ST]-E-Y-X(3)-F motif 3; required for efficient microtubule binding and stabilization" evidence="1">
    <location>
        <begin position="259"/>
        <end position="265"/>
    </location>
</feature>
<feature type="compositionally biased region" description="Basic and acidic residues" evidence="3">
    <location>
        <begin position="219"/>
        <end position="233"/>
    </location>
</feature>
<feature type="compositionally biased region" description="Basic residues" evidence="3">
    <location>
        <begin position="234"/>
        <end position="243"/>
    </location>
</feature>
<feature type="compositionally biased region" description="Basic and acidic residues" evidence="3">
    <location>
        <begin position="380"/>
        <end position="392"/>
    </location>
</feature>
<feature type="compositionally biased region" description="Basic and acidic residues" evidence="3">
    <location>
        <begin position="412"/>
        <end position="423"/>
    </location>
</feature>
<feature type="compositionally biased region" description="Low complexity" evidence="3">
    <location>
        <begin position="461"/>
        <end position="475"/>
    </location>
</feature>
<feature type="compositionally biased region" description="Polar residues" evidence="3">
    <location>
        <begin position="514"/>
        <end position="533"/>
    </location>
</feature>
<proteinExistence type="evidence at transcript level"/>
<comment type="function">
    <text evidence="1">Microtubule-binding protein that negatively regulates centriole duplication. Binds to and stabilizes microtubules.</text>
</comment>
<comment type="subcellular location">
    <subcellularLocation>
        <location evidence="1">Nucleus</location>
    </subcellularLocation>
    <subcellularLocation>
        <location evidence="1">Cytoplasm</location>
        <location evidence="1">Cytoskeleton</location>
        <location evidence="1">Microtubule organizing center</location>
        <location evidence="1">Centrosome</location>
    </subcellularLocation>
    <subcellularLocation>
        <location evidence="1">Cytoplasm</location>
        <location evidence="1">Cytoskeleton</location>
        <location evidence="1">Microtubule organizing center</location>
        <location evidence="1">Centrosome</location>
        <location evidence="1">Centriole</location>
    </subcellularLocation>
    <text evidence="1">Localizes to the centriole lumen.</text>
</comment>
<comment type="similarity">
    <text evidence="4">Belongs to the MDM1 family.</text>
</comment>
<evidence type="ECO:0000250" key="1">
    <source>
        <dbReference type="UniProtKB" id="Q8TC05"/>
    </source>
</evidence>
<evidence type="ECO:0000255" key="2"/>
<evidence type="ECO:0000256" key="3">
    <source>
        <dbReference type="SAM" id="MobiDB-lite"/>
    </source>
</evidence>
<evidence type="ECO:0000305" key="4"/>
<keyword id="KW-0175">Coiled coil</keyword>
<keyword id="KW-0963">Cytoplasm</keyword>
<keyword id="KW-0206">Cytoskeleton</keyword>
<keyword id="KW-0493">Microtubule</keyword>
<keyword id="KW-0539">Nucleus</keyword>
<keyword id="KW-1185">Reference proteome</keyword>
<keyword id="KW-0677">Repeat</keyword>
<dbReference type="EMBL" id="AJ719268">
    <property type="protein sequence ID" value="CAG30927.1"/>
    <property type="molecule type" value="mRNA"/>
</dbReference>
<dbReference type="RefSeq" id="NP_001025913.1">
    <property type="nucleotide sequence ID" value="NM_001030742.1"/>
</dbReference>
<dbReference type="FunCoup" id="Q5ZMW6">
    <property type="interactions" value="818"/>
</dbReference>
<dbReference type="STRING" id="9031.ENSGALP00000016111"/>
<dbReference type="PaxDb" id="9031-ENSGALP00000016111"/>
<dbReference type="GeneID" id="417839"/>
<dbReference type="KEGG" id="gga:417839"/>
<dbReference type="CTD" id="56890"/>
<dbReference type="VEuPathDB" id="HostDB:geneid_417839"/>
<dbReference type="eggNOG" id="ENOG502QVRV">
    <property type="taxonomic scope" value="Eukaryota"/>
</dbReference>
<dbReference type="InParanoid" id="Q5ZMW6"/>
<dbReference type="OrthoDB" id="9999940at2759"/>
<dbReference type="PhylomeDB" id="Q5ZMW6"/>
<dbReference type="PRO" id="PR:Q5ZMW6"/>
<dbReference type="Proteomes" id="UP000000539">
    <property type="component" value="Unassembled WGS sequence"/>
</dbReference>
<dbReference type="GO" id="GO:0005814">
    <property type="term" value="C:centriole"/>
    <property type="evidence" value="ECO:0000250"/>
    <property type="project" value="UniProtKB"/>
</dbReference>
<dbReference type="GO" id="GO:0005813">
    <property type="term" value="C:centrosome"/>
    <property type="evidence" value="ECO:0000250"/>
    <property type="project" value="UniProtKB"/>
</dbReference>
<dbReference type="GO" id="GO:0005737">
    <property type="term" value="C:cytoplasm"/>
    <property type="evidence" value="ECO:0007669"/>
    <property type="project" value="UniProtKB-KW"/>
</dbReference>
<dbReference type="GO" id="GO:0005874">
    <property type="term" value="C:microtubule"/>
    <property type="evidence" value="ECO:0007669"/>
    <property type="project" value="UniProtKB-KW"/>
</dbReference>
<dbReference type="GO" id="GO:0005634">
    <property type="term" value="C:nucleus"/>
    <property type="evidence" value="ECO:0000250"/>
    <property type="project" value="UniProtKB"/>
</dbReference>
<dbReference type="GO" id="GO:0008017">
    <property type="term" value="F:microtubule binding"/>
    <property type="evidence" value="ECO:0000250"/>
    <property type="project" value="UniProtKB"/>
</dbReference>
<dbReference type="GO" id="GO:0046600">
    <property type="term" value="P:negative regulation of centriole replication"/>
    <property type="evidence" value="ECO:0000250"/>
    <property type="project" value="UniProtKB"/>
</dbReference>
<dbReference type="GO" id="GO:0060041">
    <property type="term" value="P:retina development in camera-type eye"/>
    <property type="evidence" value="ECO:0000318"/>
    <property type="project" value="GO_Central"/>
</dbReference>
<dbReference type="InterPro" id="IPR029136">
    <property type="entry name" value="MDM1"/>
</dbReference>
<dbReference type="PANTHER" id="PTHR32078">
    <property type="entry name" value="NUCLEAR PROTEIN MDM1"/>
    <property type="match status" value="1"/>
</dbReference>
<dbReference type="PANTHER" id="PTHR32078:SF1">
    <property type="entry name" value="NUCLEAR PROTEIN MDM1"/>
    <property type="match status" value="1"/>
</dbReference>
<dbReference type="Pfam" id="PF15501">
    <property type="entry name" value="MDM1"/>
    <property type="match status" value="2"/>
</dbReference>
<organism>
    <name type="scientific">Gallus gallus</name>
    <name type="common">Chicken</name>
    <dbReference type="NCBI Taxonomy" id="9031"/>
    <lineage>
        <taxon>Eukaryota</taxon>
        <taxon>Metazoa</taxon>
        <taxon>Chordata</taxon>
        <taxon>Craniata</taxon>
        <taxon>Vertebrata</taxon>
        <taxon>Euteleostomi</taxon>
        <taxon>Archelosauria</taxon>
        <taxon>Archosauria</taxon>
        <taxon>Dinosauria</taxon>
        <taxon>Saurischia</taxon>
        <taxon>Theropoda</taxon>
        <taxon>Coelurosauria</taxon>
        <taxon>Aves</taxon>
        <taxon>Neognathae</taxon>
        <taxon>Galloanserae</taxon>
        <taxon>Galliformes</taxon>
        <taxon>Phasianidae</taxon>
        <taxon>Phasianinae</taxon>
        <taxon>Gallus</taxon>
    </lineage>
</organism>
<gene>
    <name type="primary">MDM1</name>
    <name type="ORF">RCJMB04_1a5</name>
</gene>
<name>MDM1_CHICK</name>
<protein>
    <recommendedName>
        <fullName>Nuclear protein MDM1</fullName>
    </recommendedName>
</protein>
<accession>Q5ZMW6</accession>
<reference key="1">
    <citation type="journal article" date="2005" name="Genome Biol.">
        <title>Full-length cDNAs from chicken bursal lymphocytes to facilitate gene function analysis.</title>
        <authorList>
            <person name="Caldwell R.B."/>
            <person name="Kierzek A.M."/>
            <person name="Arakawa H."/>
            <person name="Bezzubov Y."/>
            <person name="Zaim J."/>
            <person name="Fiedler P."/>
            <person name="Kutter S."/>
            <person name="Blagodatski A."/>
            <person name="Kostovska D."/>
            <person name="Koter M."/>
            <person name="Plachy J."/>
            <person name="Carninci P."/>
            <person name="Hayashizaki Y."/>
            <person name="Buerstedde J.-M."/>
        </authorList>
    </citation>
    <scope>NUCLEOTIDE SEQUENCE [LARGE SCALE MRNA]</scope>
    <source>
        <strain>CB</strain>
        <tissue>Bursa of Fabricius</tissue>
    </source>
</reference>